<sequence length="123" mass="14195">MTKLKCKSLRGEKKDALQKKLDEQKTELATLRVSKVTGGAASKLSKIRVVRKNIARLLTVINQTQKQELRKFYADHKYKPIDLRLKKTRAIRRRLTAHELSLRSAKQQAKSRNQAVRKFAVKA</sequence>
<evidence type="ECO:0000305" key="1"/>
<accession>P34662</accession>
<comment type="similarity">
    <text evidence="1">Belongs to the universal ribosomal protein uL29 family.</text>
</comment>
<gene>
    <name type="primary">rpl-35</name>
    <name type="ORF">ZK652.4</name>
</gene>
<protein>
    <recommendedName>
        <fullName evidence="1">Large ribosomal subunit protein uL29</fullName>
    </recommendedName>
    <alternativeName>
        <fullName>60S ribosomal protein L35</fullName>
    </alternativeName>
</protein>
<name>RL35_CAEEL</name>
<organism>
    <name type="scientific">Caenorhabditis elegans</name>
    <dbReference type="NCBI Taxonomy" id="6239"/>
    <lineage>
        <taxon>Eukaryota</taxon>
        <taxon>Metazoa</taxon>
        <taxon>Ecdysozoa</taxon>
        <taxon>Nematoda</taxon>
        <taxon>Chromadorea</taxon>
        <taxon>Rhabditida</taxon>
        <taxon>Rhabditina</taxon>
        <taxon>Rhabditomorpha</taxon>
        <taxon>Rhabditoidea</taxon>
        <taxon>Rhabditidae</taxon>
        <taxon>Peloderinae</taxon>
        <taxon>Caenorhabditis</taxon>
    </lineage>
</organism>
<feature type="chain" id="PRO_0000130544" description="Large ribosomal subunit protein uL29">
    <location>
        <begin position="1"/>
        <end position="123"/>
    </location>
</feature>
<reference key="1">
    <citation type="journal article" date="1994" name="Nature">
        <title>2.2 Mb of contiguous nucleotide sequence from chromosome III of C. elegans.</title>
        <authorList>
            <person name="Wilson R."/>
            <person name="Ainscough R."/>
            <person name="Anderson K."/>
            <person name="Baynes C."/>
            <person name="Berks M."/>
            <person name="Bonfield J."/>
            <person name="Burton J."/>
            <person name="Connell M."/>
            <person name="Copsey T."/>
            <person name="Cooper J."/>
            <person name="Coulson A."/>
            <person name="Craxton M."/>
            <person name="Dear S."/>
            <person name="Du Z."/>
            <person name="Durbin R."/>
            <person name="Favello A."/>
            <person name="Fraser A."/>
            <person name="Fulton L."/>
            <person name="Gardner A."/>
            <person name="Green P."/>
            <person name="Hawkins T."/>
            <person name="Hillier L."/>
            <person name="Jier M."/>
            <person name="Johnston L."/>
            <person name="Jones M."/>
            <person name="Kershaw J."/>
            <person name="Kirsten J."/>
            <person name="Laisster N."/>
            <person name="Latreille P."/>
            <person name="Lightning J."/>
            <person name="Lloyd C."/>
            <person name="Mortimore B."/>
            <person name="O'Callaghan M."/>
            <person name="Parsons J."/>
            <person name="Percy C."/>
            <person name="Rifken L."/>
            <person name="Roopra A."/>
            <person name="Saunders D."/>
            <person name="Shownkeen R."/>
            <person name="Sims M."/>
            <person name="Smaldon N."/>
            <person name="Smith A."/>
            <person name="Smith M."/>
            <person name="Sonnhammer E."/>
            <person name="Staden R."/>
            <person name="Sulston J."/>
            <person name="Thierry-Mieg J."/>
            <person name="Thomas K."/>
            <person name="Vaudin M."/>
            <person name="Vaughan K."/>
            <person name="Waterston R."/>
            <person name="Watson A."/>
            <person name="Weinstock L."/>
            <person name="Wilkinson-Sproat J."/>
            <person name="Wohldman P."/>
        </authorList>
    </citation>
    <scope>NUCLEOTIDE SEQUENCE [LARGE SCALE GENOMIC DNA]</scope>
    <source>
        <strain>Bristol N2</strain>
    </source>
</reference>
<reference key="2">
    <citation type="journal article" date="1998" name="Science">
        <title>Genome sequence of the nematode C. elegans: a platform for investigating biology.</title>
        <authorList>
            <consortium name="The C. elegans sequencing consortium"/>
        </authorList>
    </citation>
    <scope>NUCLEOTIDE SEQUENCE [LARGE SCALE GENOMIC DNA]</scope>
    <source>
        <strain>Bristol N2</strain>
    </source>
</reference>
<dbReference type="EMBL" id="FO080278">
    <property type="protein sequence ID" value="CCD62549.1"/>
    <property type="molecule type" value="Genomic_DNA"/>
</dbReference>
<dbReference type="PIR" id="S44905">
    <property type="entry name" value="S44905"/>
</dbReference>
<dbReference type="RefSeq" id="NP_001379601.1">
    <property type="nucleotide sequence ID" value="NM_001392146.1"/>
</dbReference>
<dbReference type="RefSeq" id="NP_498702.1">
    <property type="nucleotide sequence ID" value="NM_066301.5"/>
</dbReference>
<dbReference type="PDB" id="9BH5">
    <property type="method" value="EM"/>
    <property type="resolution" value="2.63 A"/>
    <property type="chains" value="Ch=1-123"/>
</dbReference>
<dbReference type="PDB" id="9CAI">
    <property type="method" value="EM"/>
    <property type="resolution" value="2.59 A"/>
    <property type="chains" value="Ch=1-123"/>
</dbReference>
<dbReference type="PDBsum" id="9BH5"/>
<dbReference type="PDBsum" id="9CAI"/>
<dbReference type="EMDB" id="EMD-44533"/>
<dbReference type="EMDB" id="EMD-45392"/>
<dbReference type="SMR" id="P34662"/>
<dbReference type="BioGRID" id="41305">
    <property type="interactions" value="93"/>
</dbReference>
<dbReference type="DIP" id="DIP-24880N"/>
<dbReference type="FunCoup" id="P34662">
    <property type="interactions" value="1853"/>
</dbReference>
<dbReference type="STRING" id="6239.ZK652.4.3"/>
<dbReference type="PaxDb" id="6239-ZK652.4.3"/>
<dbReference type="PeptideAtlas" id="P34662"/>
<dbReference type="EnsemblMetazoa" id="ZK652.4.1">
    <property type="protein sequence ID" value="ZK652.4.1"/>
    <property type="gene ID" value="WBGene00004449"/>
</dbReference>
<dbReference type="GeneID" id="176097"/>
<dbReference type="UCSC" id="ZK652.4.1">
    <property type="organism name" value="c. elegans"/>
</dbReference>
<dbReference type="AGR" id="WB:WBGene00004449"/>
<dbReference type="WormBase" id="ZK652.4">
    <property type="protein sequence ID" value="CE00450"/>
    <property type="gene ID" value="WBGene00004449"/>
    <property type="gene designation" value="rpl-35"/>
</dbReference>
<dbReference type="eggNOG" id="KOG3436">
    <property type="taxonomic scope" value="Eukaryota"/>
</dbReference>
<dbReference type="GeneTree" id="ENSGT00390000016384"/>
<dbReference type="HOGENOM" id="CLU_110381_1_1_1"/>
<dbReference type="InParanoid" id="P34662"/>
<dbReference type="OMA" id="VMNQKAR"/>
<dbReference type="OrthoDB" id="528635at2759"/>
<dbReference type="PhylomeDB" id="P34662"/>
<dbReference type="Reactome" id="R-CEL-156827">
    <property type="pathway name" value="L13a-mediated translational silencing of Ceruloplasmin expression"/>
</dbReference>
<dbReference type="Reactome" id="R-CEL-1799339">
    <property type="pathway name" value="SRP-dependent cotranslational protein targeting to membrane"/>
</dbReference>
<dbReference type="Reactome" id="R-CEL-72689">
    <property type="pathway name" value="Formation of a pool of free 40S subunits"/>
</dbReference>
<dbReference type="Reactome" id="R-CEL-72706">
    <property type="pathway name" value="GTP hydrolysis and joining of the 60S ribosomal subunit"/>
</dbReference>
<dbReference type="Reactome" id="R-CEL-975956">
    <property type="pathway name" value="Nonsense Mediated Decay (NMD) independent of the Exon Junction Complex (EJC)"/>
</dbReference>
<dbReference type="Reactome" id="R-CEL-975957">
    <property type="pathway name" value="Nonsense Mediated Decay (NMD) enhanced by the Exon Junction Complex (EJC)"/>
</dbReference>
<dbReference type="PRO" id="PR:P34662"/>
<dbReference type="Proteomes" id="UP000001940">
    <property type="component" value="Chromosome III"/>
</dbReference>
<dbReference type="Bgee" id="WBGene00004449">
    <property type="expression patterns" value="Expressed in germ line (C elegans) and 4 other cell types or tissues"/>
</dbReference>
<dbReference type="GO" id="GO:0022625">
    <property type="term" value="C:cytosolic large ribosomal subunit"/>
    <property type="evidence" value="ECO:0000318"/>
    <property type="project" value="GO_Central"/>
</dbReference>
<dbReference type="GO" id="GO:0003729">
    <property type="term" value="F:mRNA binding"/>
    <property type="evidence" value="ECO:0000318"/>
    <property type="project" value="GO_Central"/>
</dbReference>
<dbReference type="GO" id="GO:0003735">
    <property type="term" value="F:structural constituent of ribosome"/>
    <property type="evidence" value="ECO:0000318"/>
    <property type="project" value="GO_Central"/>
</dbReference>
<dbReference type="GO" id="GO:0000463">
    <property type="term" value="P:maturation of LSU-rRNA from tricistronic rRNA transcript (SSU-rRNA, 5.8S rRNA, LSU-rRNA)"/>
    <property type="evidence" value="ECO:0000318"/>
    <property type="project" value="GO_Central"/>
</dbReference>
<dbReference type="GO" id="GO:0006412">
    <property type="term" value="P:translation"/>
    <property type="evidence" value="ECO:0007669"/>
    <property type="project" value="InterPro"/>
</dbReference>
<dbReference type="CDD" id="cd00427">
    <property type="entry name" value="Ribosomal_L29_HIP"/>
    <property type="match status" value="1"/>
</dbReference>
<dbReference type="FunFam" id="1.10.287.310:FF:000002">
    <property type="entry name" value="60S ribosomal protein L35"/>
    <property type="match status" value="1"/>
</dbReference>
<dbReference type="FunFam" id="6.10.250.3450:FF:000001">
    <property type="entry name" value="60S ribosomal protein L35"/>
    <property type="match status" value="1"/>
</dbReference>
<dbReference type="Gene3D" id="1.10.287.310">
    <property type="match status" value="1"/>
</dbReference>
<dbReference type="Gene3D" id="6.10.250.3450">
    <property type="match status" value="1"/>
</dbReference>
<dbReference type="HAMAP" id="MF_00374">
    <property type="entry name" value="Ribosomal_uL29"/>
    <property type="match status" value="1"/>
</dbReference>
<dbReference type="InterPro" id="IPR001854">
    <property type="entry name" value="Ribosomal_uL29"/>
</dbReference>
<dbReference type="InterPro" id="IPR018254">
    <property type="entry name" value="Ribosomal_uL29_CS"/>
</dbReference>
<dbReference type="InterPro" id="IPR045059">
    <property type="entry name" value="Ribosomal_uL29_euk"/>
</dbReference>
<dbReference type="InterPro" id="IPR036049">
    <property type="entry name" value="Ribosomal_uL29_sf"/>
</dbReference>
<dbReference type="NCBIfam" id="TIGR00012">
    <property type="entry name" value="L29"/>
    <property type="match status" value="1"/>
</dbReference>
<dbReference type="PANTHER" id="PTHR45722">
    <property type="entry name" value="60S RIBOSOMAL PROTEIN L35"/>
    <property type="match status" value="1"/>
</dbReference>
<dbReference type="PANTHER" id="PTHR45722:SF2">
    <property type="entry name" value="LARGE RIBOSOMAL SUBUNIT PROTEIN UL29-RELATED"/>
    <property type="match status" value="1"/>
</dbReference>
<dbReference type="Pfam" id="PF00831">
    <property type="entry name" value="Ribosomal_L29"/>
    <property type="match status" value="1"/>
</dbReference>
<dbReference type="SUPFAM" id="SSF46561">
    <property type="entry name" value="Ribosomal protein L29 (L29p)"/>
    <property type="match status" value="1"/>
</dbReference>
<dbReference type="PROSITE" id="PS00579">
    <property type="entry name" value="RIBOSOMAL_L29"/>
    <property type="match status" value="1"/>
</dbReference>
<proteinExistence type="evidence at protein level"/>
<keyword id="KW-0002">3D-structure</keyword>
<keyword id="KW-1185">Reference proteome</keyword>
<keyword id="KW-0687">Ribonucleoprotein</keyword>
<keyword id="KW-0689">Ribosomal protein</keyword>